<name>MNMA_HELPH</name>
<gene>
    <name evidence="1" type="primary">mnmA</name>
    <name type="ordered locus">HPAG1_1282</name>
</gene>
<comment type="function">
    <text evidence="1">Catalyzes the 2-thiolation of uridine at the wobble position (U34) of tRNA, leading to the formation of s(2)U34.</text>
</comment>
<comment type="catalytic activity">
    <reaction evidence="1">
        <text>S-sulfanyl-L-cysteinyl-[protein] + uridine(34) in tRNA + AH2 + ATP = 2-thiouridine(34) in tRNA + L-cysteinyl-[protein] + A + AMP + diphosphate + H(+)</text>
        <dbReference type="Rhea" id="RHEA:47032"/>
        <dbReference type="Rhea" id="RHEA-COMP:10131"/>
        <dbReference type="Rhea" id="RHEA-COMP:11726"/>
        <dbReference type="Rhea" id="RHEA-COMP:11727"/>
        <dbReference type="Rhea" id="RHEA-COMP:11728"/>
        <dbReference type="ChEBI" id="CHEBI:13193"/>
        <dbReference type="ChEBI" id="CHEBI:15378"/>
        <dbReference type="ChEBI" id="CHEBI:17499"/>
        <dbReference type="ChEBI" id="CHEBI:29950"/>
        <dbReference type="ChEBI" id="CHEBI:30616"/>
        <dbReference type="ChEBI" id="CHEBI:33019"/>
        <dbReference type="ChEBI" id="CHEBI:61963"/>
        <dbReference type="ChEBI" id="CHEBI:65315"/>
        <dbReference type="ChEBI" id="CHEBI:87170"/>
        <dbReference type="ChEBI" id="CHEBI:456215"/>
        <dbReference type="EC" id="2.8.1.13"/>
    </reaction>
</comment>
<comment type="subcellular location">
    <subcellularLocation>
        <location evidence="1">Cytoplasm</location>
    </subcellularLocation>
</comment>
<comment type="similarity">
    <text evidence="1">Belongs to the MnmA/TRMU family.</text>
</comment>
<comment type="sequence caution" evidence="2">
    <conflict type="erroneous initiation">
        <sequence resource="EMBL-CDS" id="ABF85349"/>
    </conflict>
</comment>
<evidence type="ECO:0000255" key="1">
    <source>
        <dbReference type="HAMAP-Rule" id="MF_00144"/>
    </source>
</evidence>
<evidence type="ECO:0000305" key="2"/>
<protein>
    <recommendedName>
        <fullName evidence="1">tRNA-specific 2-thiouridylase MnmA</fullName>
        <ecNumber evidence="1">2.8.1.13</ecNumber>
    </recommendedName>
</protein>
<feature type="chain" id="PRO_0000349660" description="tRNA-specific 2-thiouridylase MnmA">
    <location>
        <begin position="1"/>
        <end position="342"/>
    </location>
</feature>
<feature type="region of interest" description="Interaction with tRNA" evidence="1">
    <location>
        <begin position="138"/>
        <end position="140"/>
    </location>
</feature>
<feature type="region of interest" description="Interaction with tRNA" evidence="1">
    <location>
        <begin position="293"/>
        <end position="294"/>
    </location>
</feature>
<feature type="active site" description="Nucleophile" evidence="1">
    <location>
        <position position="92"/>
    </location>
</feature>
<feature type="active site" description="Cysteine persulfide intermediate" evidence="1">
    <location>
        <position position="191"/>
    </location>
</feature>
<feature type="binding site" evidence="1">
    <location>
        <begin position="6"/>
        <end position="13"/>
    </location>
    <ligand>
        <name>ATP</name>
        <dbReference type="ChEBI" id="CHEBI:30616"/>
    </ligand>
</feature>
<feature type="binding site" evidence="1">
    <location>
        <position position="32"/>
    </location>
    <ligand>
        <name>ATP</name>
        <dbReference type="ChEBI" id="CHEBI:30616"/>
    </ligand>
</feature>
<feature type="binding site" evidence="1">
    <location>
        <position position="116"/>
    </location>
    <ligand>
        <name>ATP</name>
        <dbReference type="ChEBI" id="CHEBI:30616"/>
    </ligand>
</feature>
<feature type="site" description="Interaction with tRNA" evidence="1">
    <location>
        <position position="117"/>
    </location>
</feature>
<feature type="site" description="Interaction with tRNA" evidence="1">
    <location>
        <position position="325"/>
    </location>
</feature>
<feature type="disulfide bond" description="Alternate" evidence="1">
    <location>
        <begin position="92"/>
        <end position="191"/>
    </location>
</feature>
<dbReference type="EC" id="2.8.1.13" evidence="1"/>
<dbReference type="EMBL" id="CP000241">
    <property type="protein sequence ID" value="ABF85349.1"/>
    <property type="status" value="ALT_INIT"/>
    <property type="molecule type" value="Genomic_DNA"/>
</dbReference>
<dbReference type="RefSeq" id="WP_000686282.1">
    <property type="nucleotide sequence ID" value="NC_008086.1"/>
</dbReference>
<dbReference type="SMR" id="Q1CRS3"/>
<dbReference type="KEGG" id="hpa:HPAG1_1282"/>
<dbReference type="HOGENOM" id="CLU_035188_0_0_7"/>
<dbReference type="GO" id="GO:0005737">
    <property type="term" value="C:cytoplasm"/>
    <property type="evidence" value="ECO:0007669"/>
    <property type="project" value="UniProtKB-SubCell"/>
</dbReference>
<dbReference type="GO" id="GO:0005524">
    <property type="term" value="F:ATP binding"/>
    <property type="evidence" value="ECO:0007669"/>
    <property type="project" value="UniProtKB-KW"/>
</dbReference>
<dbReference type="GO" id="GO:0000049">
    <property type="term" value="F:tRNA binding"/>
    <property type="evidence" value="ECO:0007669"/>
    <property type="project" value="UniProtKB-KW"/>
</dbReference>
<dbReference type="GO" id="GO:0103016">
    <property type="term" value="F:tRNA-uridine 2-sulfurtransferase activity"/>
    <property type="evidence" value="ECO:0007669"/>
    <property type="project" value="UniProtKB-EC"/>
</dbReference>
<dbReference type="GO" id="GO:0002143">
    <property type="term" value="P:tRNA wobble position uridine thiolation"/>
    <property type="evidence" value="ECO:0007669"/>
    <property type="project" value="TreeGrafter"/>
</dbReference>
<dbReference type="CDD" id="cd01998">
    <property type="entry name" value="MnmA_TRMU-like"/>
    <property type="match status" value="1"/>
</dbReference>
<dbReference type="FunFam" id="2.30.30.280:FF:000001">
    <property type="entry name" value="tRNA-specific 2-thiouridylase MnmA"/>
    <property type="match status" value="1"/>
</dbReference>
<dbReference type="FunFam" id="3.40.50.620:FF:000323">
    <property type="entry name" value="tRNA-specific 2-thiouridylase MnmA"/>
    <property type="match status" value="1"/>
</dbReference>
<dbReference type="Gene3D" id="2.30.30.280">
    <property type="entry name" value="Adenine nucleotide alpha hydrolases-like domains"/>
    <property type="match status" value="1"/>
</dbReference>
<dbReference type="Gene3D" id="3.40.50.620">
    <property type="entry name" value="HUPs"/>
    <property type="match status" value="1"/>
</dbReference>
<dbReference type="Gene3D" id="2.40.30.10">
    <property type="entry name" value="Translation factors"/>
    <property type="match status" value="1"/>
</dbReference>
<dbReference type="HAMAP" id="MF_00144">
    <property type="entry name" value="tRNA_thiouridyl_MnmA"/>
    <property type="match status" value="1"/>
</dbReference>
<dbReference type="InterPro" id="IPR004506">
    <property type="entry name" value="MnmA-like"/>
</dbReference>
<dbReference type="InterPro" id="IPR046885">
    <property type="entry name" value="MnmA-like_C"/>
</dbReference>
<dbReference type="InterPro" id="IPR046884">
    <property type="entry name" value="MnmA-like_central"/>
</dbReference>
<dbReference type="InterPro" id="IPR023382">
    <property type="entry name" value="MnmA-like_central_sf"/>
</dbReference>
<dbReference type="InterPro" id="IPR014729">
    <property type="entry name" value="Rossmann-like_a/b/a_fold"/>
</dbReference>
<dbReference type="NCBIfam" id="NF001138">
    <property type="entry name" value="PRK00143.1"/>
    <property type="match status" value="1"/>
</dbReference>
<dbReference type="NCBIfam" id="TIGR00420">
    <property type="entry name" value="trmU"/>
    <property type="match status" value="1"/>
</dbReference>
<dbReference type="PANTHER" id="PTHR11933:SF5">
    <property type="entry name" value="MITOCHONDRIAL TRNA-SPECIFIC 2-THIOURIDYLASE 1"/>
    <property type="match status" value="1"/>
</dbReference>
<dbReference type="PANTHER" id="PTHR11933">
    <property type="entry name" value="TRNA 5-METHYLAMINOMETHYL-2-THIOURIDYLATE -METHYLTRANSFERASE"/>
    <property type="match status" value="1"/>
</dbReference>
<dbReference type="Pfam" id="PF03054">
    <property type="entry name" value="tRNA_Me_trans"/>
    <property type="match status" value="1"/>
</dbReference>
<dbReference type="Pfam" id="PF20258">
    <property type="entry name" value="tRNA_Me_trans_C"/>
    <property type="match status" value="1"/>
</dbReference>
<dbReference type="Pfam" id="PF20259">
    <property type="entry name" value="tRNA_Me_trans_M"/>
    <property type="match status" value="1"/>
</dbReference>
<dbReference type="SUPFAM" id="SSF52402">
    <property type="entry name" value="Adenine nucleotide alpha hydrolases-like"/>
    <property type="match status" value="1"/>
</dbReference>
<sequence length="342" mass="38314">MKIAVLLSGGVDSSYSAYSLKEQGHELVGIYLKLHASEKKHDLYIKNAQKACEFLGIPLEVLDFQKDFKSAVYDEFISAYEEGQTPNPCALCNPLMKFGLALDHALKLGCEKIATGHYARVKEIDKVSYIQEAVDKTKDQSYFLYALEHEVIAKLVFPLGDLLKKDIKPLALNAMPFLGTLETYKESQEICFVEKSYIDTLKKHVEVEKEGVVKNLQGEVIGTHKGYMQYTIGKRKGFNIKGALEPHFVVGIDAKKNELIVGKKEDLATHSLKAKNKSLTKDFKDGEYFIKARYRSVPAKAFVSLRDEVIEVEFEEPFYGVAKGQALVVYKDDILLGGGVIV</sequence>
<accession>Q1CRS3</accession>
<proteinExistence type="inferred from homology"/>
<organism>
    <name type="scientific">Helicobacter pylori (strain HPAG1)</name>
    <dbReference type="NCBI Taxonomy" id="357544"/>
    <lineage>
        <taxon>Bacteria</taxon>
        <taxon>Pseudomonadati</taxon>
        <taxon>Campylobacterota</taxon>
        <taxon>Epsilonproteobacteria</taxon>
        <taxon>Campylobacterales</taxon>
        <taxon>Helicobacteraceae</taxon>
        <taxon>Helicobacter</taxon>
    </lineage>
</organism>
<keyword id="KW-0067">ATP-binding</keyword>
<keyword id="KW-0963">Cytoplasm</keyword>
<keyword id="KW-1015">Disulfide bond</keyword>
<keyword id="KW-0547">Nucleotide-binding</keyword>
<keyword id="KW-0694">RNA-binding</keyword>
<keyword id="KW-0808">Transferase</keyword>
<keyword id="KW-0819">tRNA processing</keyword>
<keyword id="KW-0820">tRNA-binding</keyword>
<reference key="1">
    <citation type="journal article" date="2006" name="Proc. Natl. Acad. Sci. U.S.A.">
        <title>The complete genome sequence of a chronic atrophic gastritis Helicobacter pylori strain: evolution during disease progression.</title>
        <authorList>
            <person name="Oh J.D."/>
            <person name="Kling-Baeckhed H."/>
            <person name="Giannakis M."/>
            <person name="Xu J."/>
            <person name="Fulton R.S."/>
            <person name="Fulton L.A."/>
            <person name="Cordum H.S."/>
            <person name="Wang C."/>
            <person name="Elliott G."/>
            <person name="Edwards J."/>
            <person name="Mardis E.R."/>
            <person name="Engstrand L.G."/>
            <person name="Gordon J.I."/>
        </authorList>
    </citation>
    <scope>NUCLEOTIDE SEQUENCE [LARGE SCALE GENOMIC DNA]</scope>
    <source>
        <strain>HPAG1</strain>
    </source>
</reference>